<accession>Q7RYY4</accession>
<accession>U9W4J5</accession>
<protein>
    <recommendedName>
        <fullName>Peptidyl-prolyl cis-trans isomerase pin4</fullName>
        <shortName>PPIase pin4</shortName>
        <ecNumber>5.2.1.8</ecNumber>
    </recommendedName>
    <alternativeName>
        <fullName>Parvulin-14</fullName>
        <shortName>Par14</shortName>
    </alternativeName>
</protein>
<keyword id="KW-0413">Isomerase</keyword>
<keyword id="KW-1185">Reference proteome</keyword>
<keyword id="KW-0697">Rotamase</keyword>
<dbReference type="EC" id="5.2.1.8"/>
<dbReference type="EMBL" id="CM002238">
    <property type="protein sequence ID" value="ESA43163.1"/>
    <property type="molecule type" value="Genomic_DNA"/>
</dbReference>
<dbReference type="EMBL" id="CM002238">
    <property type="protein sequence ID" value="ESA43164.1"/>
    <property type="molecule type" value="Genomic_DNA"/>
</dbReference>
<dbReference type="RefSeq" id="XP_011393912.1">
    <property type="nucleotide sequence ID" value="XM_011395610.1"/>
</dbReference>
<dbReference type="RefSeq" id="XP_011393913.1">
    <property type="nucleotide sequence ID" value="XM_011395611.1"/>
</dbReference>
<dbReference type="SMR" id="Q7RYY4"/>
<dbReference type="STRING" id="367110.Q7RYY4"/>
<dbReference type="PaxDb" id="5141-EFNCRP00000006264"/>
<dbReference type="EnsemblFungi" id="ESA43163">
    <property type="protein sequence ID" value="ESA43163"/>
    <property type="gene ID" value="NCU06433"/>
</dbReference>
<dbReference type="EnsemblFungi" id="ESA43164">
    <property type="protein sequence ID" value="ESA43164"/>
    <property type="gene ID" value="NCU06433"/>
</dbReference>
<dbReference type="GeneID" id="3873493"/>
<dbReference type="KEGG" id="ncr:NCU06433"/>
<dbReference type="VEuPathDB" id="FungiDB:NCU06433"/>
<dbReference type="HOGENOM" id="CLU_090028_2_0_1"/>
<dbReference type="InParanoid" id="Q7RYY4"/>
<dbReference type="OrthoDB" id="1911748at2759"/>
<dbReference type="Proteomes" id="UP000001805">
    <property type="component" value="Chromosome 3, Linkage Group III"/>
</dbReference>
<dbReference type="GO" id="GO:0005634">
    <property type="term" value="C:nucleus"/>
    <property type="evidence" value="ECO:0000318"/>
    <property type="project" value="GO_Central"/>
</dbReference>
<dbReference type="GO" id="GO:0003677">
    <property type="term" value="F:DNA binding"/>
    <property type="evidence" value="ECO:0007669"/>
    <property type="project" value="InterPro"/>
</dbReference>
<dbReference type="GO" id="GO:0003755">
    <property type="term" value="F:peptidyl-prolyl cis-trans isomerase activity"/>
    <property type="evidence" value="ECO:0007669"/>
    <property type="project" value="UniProtKB-KW"/>
</dbReference>
<dbReference type="GO" id="GO:0006364">
    <property type="term" value="P:rRNA processing"/>
    <property type="evidence" value="ECO:0007669"/>
    <property type="project" value="InterPro"/>
</dbReference>
<dbReference type="Gene3D" id="3.10.50.40">
    <property type="match status" value="1"/>
</dbReference>
<dbReference type="InterPro" id="IPR043323">
    <property type="entry name" value="PIN4"/>
</dbReference>
<dbReference type="InterPro" id="IPR046357">
    <property type="entry name" value="PPIase_dom_sf"/>
</dbReference>
<dbReference type="InterPro" id="IPR000297">
    <property type="entry name" value="PPIase_PpiC"/>
</dbReference>
<dbReference type="PANTHER" id="PTHR45995">
    <property type="match status" value="1"/>
</dbReference>
<dbReference type="Pfam" id="PF13616">
    <property type="entry name" value="Rotamase_3"/>
    <property type="match status" value="1"/>
</dbReference>
<dbReference type="SUPFAM" id="SSF54534">
    <property type="entry name" value="FKBP-like"/>
    <property type="match status" value="1"/>
</dbReference>
<dbReference type="PROSITE" id="PS50198">
    <property type="entry name" value="PPIC_PPIASE_2"/>
    <property type="match status" value="1"/>
</dbReference>
<proteinExistence type="inferred from homology"/>
<gene>
    <name type="primary">ppi-5</name>
    <name type="synonym">pin4</name>
    <name type="ORF">NCU06433</name>
</gene>
<name>PIN4_NEUCR</name>
<organism>
    <name type="scientific">Neurospora crassa (strain ATCC 24698 / 74-OR23-1A / CBS 708.71 / DSM 1257 / FGSC 987)</name>
    <dbReference type="NCBI Taxonomy" id="367110"/>
    <lineage>
        <taxon>Eukaryota</taxon>
        <taxon>Fungi</taxon>
        <taxon>Dikarya</taxon>
        <taxon>Ascomycota</taxon>
        <taxon>Pezizomycotina</taxon>
        <taxon>Sordariomycetes</taxon>
        <taxon>Sordariomycetidae</taxon>
        <taxon>Sordariales</taxon>
        <taxon>Sordariaceae</taxon>
        <taxon>Neurospora</taxon>
    </lineage>
</organism>
<reference key="1">
    <citation type="journal article" date="2003" name="Nature">
        <title>The genome sequence of the filamentous fungus Neurospora crassa.</title>
        <authorList>
            <person name="Galagan J.E."/>
            <person name="Calvo S.E."/>
            <person name="Borkovich K.A."/>
            <person name="Selker E.U."/>
            <person name="Read N.D."/>
            <person name="Jaffe D.B."/>
            <person name="FitzHugh W."/>
            <person name="Ma L.-J."/>
            <person name="Smirnov S."/>
            <person name="Purcell S."/>
            <person name="Rehman B."/>
            <person name="Elkins T."/>
            <person name="Engels R."/>
            <person name="Wang S."/>
            <person name="Nielsen C.B."/>
            <person name="Butler J."/>
            <person name="Endrizzi M."/>
            <person name="Qui D."/>
            <person name="Ianakiev P."/>
            <person name="Bell-Pedersen D."/>
            <person name="Nelson M.A."/>
            <person name="Werner-Washburne M."/>
            <person name="Selitrennikoff C.P."/>
            <person name="Kinsey J.A."/>
            <person name="Braun E.L."/>
            <person name="Zelter A."/>
            <person name="Schulte U."/>
            <person name="Kothe G.O."/>
            <person name="Jedd G."/>
            <person name="Mewes H.-W."/>
            <person name="Staben C."/>
            <person name="Marcotte E."/>
            <person name="Greenberg D."/>
            <person name="Roy A."/>
            <person name="Foley K."/>
            <person name="Naylor J."/>
            <person name="Stange-Thomann N."/>
            <person name="Barrett R."/>
            <person name="Gnerre S."/>
            <person name="Kamal M."/>
            <person name="Kamvysselis M."/>
            <person name="Mauceli E.W."/>
            <person name="Bielke C."/>
            <person name="Rudd S."/>
            <person name="Frishman D."/>
            <person name="Krystofova S."/>
            <person name="Rasmussen C."/>
            <person name="Metzenberg R.L."/>
            <person name="Perkins D.D."/>
            <person name="Kroken S."/>
            <person name="Cogoni C."/>
            <person name="Macino G."/>
            <person name="Catcheside D.E.A."/>
            <person name="Li W."/>
            <person name="Pratt R.J."/>
            <person name="Osmani S.A."/>
            <person name="DeSouza C.P.C."/>
            <person name="Glass N.L."/>
            <person name="Orbach M.J."/>
            <person name="Berglund J.A."/>
            <person name="Voelker R."/>
            <person name="Yarden O."/>
            <person name="Plamann M."/>
            <person name="Seiler S."/>
            <person name="Dunlap J.C."/>
            <person name="Radford A."/>
            <person name="Aramayo R."/>
            <person name="Natvig D.O."/>
            <person name="Alex L.A."/>
            <person name="Mannhaupt G."/>
            <person name="Ebbole D.J."/>
            <person name="Freitag M."/>
            <person name="Paulsen I."/>
            <person name="Sachs M.S."/>
            <person name="Lander E.S."/>
            <person name="Nusbaum C."/>
            <person name="Birren B.W."/>
        </authorList>
    </citation>
    <scope>NUCLEOTIDE SEQUENCE [LARGE SCALE GENOMIC DNA]</scope>
    <source>
        <strain>ATCC 24698 / 74-OR23-1A / CBS 708.71 / DSM 1257 / FGSC 987</strain>
    </source>
</reference>
<reference key="2">
    <citation type="submission" date="2006-02" db="UniProtKB">
        <authorList>
            <person name="Pemberton T.J."/>
        </authorList>
    </citation>
    <scope>REVISION OF GENE MODEL</scope>
</reference>
<sequence>MGKDKKASGSGSGSKGGKDAGNKDAGKDAGKASKGAQSINVRHILCEKHGKKEEALAKIRDGADFGAVAREYSEDKARTGGSLGWKQKGTLDPEFEKVAFALETSSTSSPKIGEVKTQFGYHIIMVEGKK</sequence>
<comment type="function">
    <text evidence="1">PPIases accelerate the folding of proteins. It catalyzes the cis-trans isomerization of proline imidic peptide bonds in oligopeptides (By similarity).</text>
</comment>
<comment type="catalytic activity">
    <reaction>
        <text>[protein]-peptidylproline (omega=180) = [protein]-peptidylproline (omega=0)</text>
        <dbReference type="Rhea" id="RHEA:16237"/>
        <dbReference type="Rhea" id="RHEA-COMP:10747"/>
        <dbReference type="Rhea" id="RHEA-COMP:10748"/>
        <dbReference type="ChEBI" id="CHEBI:83833"/>
        <dbReference type="ChEBI" id="CHEBI:83834"/>
        <dbReference type="EC" id="5.2.1.8"/>
    </reaction>
</comment>
<comment type="similarity">
    <text evidence="4">Belongs to the PpiC/parvulin rotamase family. PIN4 subfamily.</text>
</comment>
<feature type="chain" id="PRO_0000232935" description="Peptidyl-prolyl cis-trans isomerase pin4">
    <location>
        <begin position="1"/>
        <end position="130"/>
    </location>
</feature>
<feature type="domain" description="PpiC" evidence="2">
    <location>
        <begin position="36"/>
        <end position="128"/>
    </location>
</feature>
<feature type="region of interest" description="Disordered" evidence="3">
    <location>
        <begin position="1"/>
        <end position="38"/>
    </location>
</feature>
<feature type="compositionally biased region" description="Basic and acidic residues" evidence="3">
    <location>
        <begin position="16"/>
        <end position="31"/>
    </location>
</feature>
<evidence type="ECO:0000250" key="1"/>
<evidence type="ECO:0000255" key="2">
    <source>
        <dbReference type="PROSITE-ProRule" id="PRU00278"/>
    </source>
</evidence>
<evidence type="ECO:0000256" key="3">
    <source>
        <dbReference type="SAM" id="MobiDB-lite"/>
    </source>
</evidence>
<evidence type="ECO:0000305" key="4"/>